<dbReference type="EMBL" id="BC114145">
    <property type="protein sequence ID" value="AAI14146.1"/>
    <property type="molecule type" value="mRNA"/>
</dbReference>
<dbReference type="EMBL" id="BC148971">
    <property type="protein sequence ID" value="AAI48972.1"/>
    <property type="molecule type" value="mRNA"/>
</dbReference>
<dbReference type="RefSeq" id="NP_001039669.2">
    <molecule id="A6QNS3-1"/>
    <property type="nucleotide sequence ID" value="NM_001046204.2"/>
</dbReference>
<dbReference type="SMR" id="A6QNS3"/>
<dbReference type="FunCoup" id="A6QNS3">
    <property type="interactions" value="2710"/>
</dbReference>
<dbReference type="STRING" id="9913.ENSBTAP00000058790"/>
<dbReference type="PaxDb" id="9913-ENSBTAP00000011083"/>
<dbReference type="Ensembl" id="ENSBTAT00000011083.7">
    <molecule id="A6QNS3-1"/>
    <property type="protein sequence ID" value="ENSBTAP00000011083.5"/>
    <property type="gene ID" value="ENSBTAG00000008424.7"/>
</dbReference>
<dbReference type="GeneID" id="515556"/>
<dbReference type="KEGG" id="bta:515556"/>
<dbReference type="CTD" id="29"/>
<dbReference type="VEuPathDB" id="HostDB:ENSBTAG00000008424"/>
<dbReference type="eggNOG" id="KOG4269">
    <property type="taxonomic scope" value="Eukaryota"/>
</dbReference>
<dbReference type="GeneTree" id="ENSGT00940000153491"/>
<dbReference type="HOGENOM" id="CLU_004000_1_0_1"/>
<dbReference type="InParanoid" id="A6QNS3"/>
<dbReference type="OMA" id="TMFYKIP"/>
<dbReference type="OrthoDB" id="79452at2759"/>
<dbReference type="TreeFam" id="TF105082"/>
<dbReference type="Reactome" id="R-BTA-193648">
    <property type="pathway name" value="NRAGE signals death through JNK"/>
</dbReference>
<dbReference type="Reactome" id="R-BTA-416482">
    <property type="pathway name" value="G alpha (12/13) signalling events"/>
</dbReference>
<dbReference type="Reactome" id="R-BTA-8980692">
    <property type="pathway name" value="RHOA GTPase cycle"/>
</dbReference>
<dbReference type="Reactome" id="R-BTA-9013106">
    <property type="pathway name" value="RHOC GTPase cycle"/>
</dbReference>
<dbReference type="Reactome" id="R-BTA-9013148">
    <property type="pathway name" value="CDC42 GTPase cycle"/>
</dbReference>
<dbReference type="Reactome" id="R-BTA-9013149">
    <property type="pathway name" value="RAC1 GTPase cycle"/>
</dbReference>
<dbReference type="Reactome" id="R-BTA-9013404">
    <property type="pathway name" value="RAC2 GTPase cycle"/>
</dbReference>
<dbReference type="Reactome" id="R-BTA-9013423">
    <property type="pathway name" value="RAC3 GTPase cycle"/>
</dbReference>
<dbReference type="Proteomes" id="UP000009136">
    <property type="component" value="Chromosome 19"/>
</dbReference>
<dbReference type="Bgee" id="ENSBTAG00000008424">
    <property type="expression patterns" value="Expressed in prefrontal cortex and 105 other cell types or tissues"/>
</dbReference>
<dbReference type="GO" id="GO:0030424">
    <property type="term" value="C:axon"/>
    <property type="evidence" value="ECO:0007669"/>
    <property type="project" value="UniProtKB-SubCell"/>
</dbReference>
<dbReference type="GO" id="GO:0043197">
    <property type="term" value="C:dendritic spine"/>
    <property type="evidence" value="ECO:0007669"/>
    <property type="project" value="UniProtKB-SubCell"/>
</dbReference>
<dbReference type="GO" id="GO:0016020">
    <property type="term" value="C:membrane"/>
    <property type="evidence" value="ECO:0000318"/>
    <property type="project" value="GO_Central"/>
</dbReference>
<dbReference type="GO" id="GO:0005096">
    <property type="term" value="F:GTPase activator activity"/>
    <property type="evidence" value="ECO:0000250"/>
    <property type="project" value="UniProtKB"/>
</dbReference>
<dbReference type="GO" id="GO:0005085">
    <property type="term" value="F:guanyl-nucleotide exchange factor activity"/>
    <property type="evidence" value="ECO:0000250"/>
    <property type="project" value="UniProtKB"/>
</dbReference>
<dbReference type="GO" id="GO:0090630">
    <property type="term" value="P:activation of GTPase activity"/>
    <property type="evidence" value="ECO:0000250"/>
    <property type="project" value="UniProtKB"/>
</dbReference>
<dbReference type="GO" id="GO:0035556">
    <property type="term" value="P:intracellular signal transduction"/>
    <property type="evidence" value="ECO:0007669"/>
    <property type="project" value="InterPro"/>
</dbReference>
<dbReference type="CDD" id="cd08686">
    <property type="entry name" value="C2_ABR"/>
    <property type="match status" value="1"/>
</dbReference>
<dbReference type="CDD" id="cd13366">
    <property type="entry name" value="PH_ABR"/>
    <property type="match status" value="1"/>
</dbReference>
<dbReference type="CDD" id="cd04387">
    <property type="entry name" value="RhoGAP_Bcr"/>
    <property type="match status" value="1"/>
</dbReference>
<dbReference type="CDD" id="cd00160">
    <property type="entry name" value="RhoGEF"/>
    <property type="match status" value="1"/>
</dbReference>
<dbReference type="FunFam" id="2.60.40.150:FF:000057">
    <property type="entry name" value="active breakpoint cluster region-related protein isoform X1"/>
    <property type="match status" value="1"/>
</dbReference>
<dbReference type="FunFam" id="1.20.900.10:FF:000014">
    <property type="entry name" value="active breakpoint cluster region-related protein isoform X2"/>
    <property type="match status" value="1"/>
</dbReference>
<dbReference type="FunFam" id="2.30.29.30:FF:000112">
    <property type="entry name" value="active breakpoint cluster region-related protein isoform X2"/>
    <property type="match status" value="1"/>
</dbReference>
<dbReference type="FunFam" id="1.10.555.10:FF:000004">
    <property type="entry name" value="active breakpoint cluster region-related protein-like"/>
    <property type="match status" value="1"/>
</dbReference>
<dbReference type="Gene3D" id="2.60.40.150">
    <property type="entry name" value="C2 domain"/>
    <property type="match status" value="1"/>
</dbReference>
<dbReference type="Gene3D" id="1.20.900.10">
    <property type="entry name" value="Dbl homology (DH) domain"/>
    <property type="match status" value="1"/>
</dbReference>
<dbReference type="Gene3D" id="2.30.29.30">
    <property type="entry name" value="Pleckstrin-homology domain (PH domain)/Phosphotyrosine-binding domain (PTB)"/>
    <property type="match status" value="1"/>
</dbReference>
<dbReference type="Gene3D" id="1.10.555.10">
    <property type="entry name" value="Rho GTPase activation protein"/>
    <property type="match status" value="1"/>
</dbReference>
<dbReference type="InterPro" id="IPR037769">
    <property type="entry name" value="Abr/Bcr"/>
</dbReference>
<dbReference type="InterPro" id="IPR037865">
    <property type="entry name" value="ABR_PH"/>
</dbReference>
<dbReference type="InterPro" id="IPR000008">
    <property type="entry name" value="C2_dom"/>
</dbReference>
<dbReference type="InterPro" id="IPR035892">
    <property type="entry name" value="C2_domain_sf"/>
</dbReference>
<dbReference type="InterPro" id="IPR035899">
    <property type="entry name" value="DBL_dom_sf"/>
</dbReference>
<dbReference type="InterPro" id="IPR000219">
    <property type="entry name" value="DH_dom"/>
</dbReference>
<dbReference type="InterPro" id="IPR001331">
    <property type="entry name" value="GDS_CDC24_CS"/>
</dbReference>
<dbReference type="InterPro" id="IPR011993">
    <property type="entry name" value="PH-like_dom_sf"/>
</dbReference>
<dbReference type="InterPro" id="IPR001849">
    <property type="entry name" value="PH_domain"/>
</dbReference>
<dbReference type="InterPro" id="IPR008936">
    <property type="entry name" value="Rho_GTPase_activation_prot"/>
</dbReference>
<dbReference type="InterPro" id="IPR000198">
    <property type="entry name" value="RhoGAP_dom"/>
</dbReference>
<dbReference type="PANTHER" id="PTHR23182:SF5">
    <property type="entry name" value="ACTIVE BREAKPOINT CLUSTER REGION-RELATED PROTEIN"/>
    <property type="match status" value="1"/>
</dbReference>
<dbReference type="PANTHER" id="PTHR23182">
    <property type="entry name" value="BREAKPOINT CLUSTER REGION PROTEIN BCR"/>
    <property type="match status" value="1"/>
</dbReference>
<dbReference type="Pfam" id="PF00168">
    <property type="entry name" value="C2"/>
    <property type="match status" value="1"/>
</dbReference>
<dbReference type="Pfam" id="PF19057">
    <property type="entry name" value="PH_19"/>
    <property type="match status" value="1"/>
</dbReference>
<dbReference type="Pfam" id="PF00620">
    <property type="entry name" value="RhoGAP"/>
    <property type="match status" value="1"/>
</dbReference>
<dbReference type="Pfam" id="PF00621">
    <property type="entry name" value="RhoGEF"/>
    <property type="match status" value="1"/>
</dbReference>
<dbReference type="SMART" id="SM00239">
    <property type="entry name" value="C2"/>
    <property type="match status" value="1"/>
</dbReference>
<dbReference type="SMART" id="SM00233">
    <property type="entry name" value="PH"/>
    <property type="match status" value="1"/>
</dbReference>
<dbReference type="SMART" id="SM00324">
    <property type="entry name" value="RhoGAP"/>
    <property type="match status" value="1"/>
</dbReference>
<dbReference type="SMART" id="SM00325">
    <property type="entry name" value="RhoGEF"/>
    <property type="match status" value="1"/>
</dbReference>
<dbReference type="SUPFAM" id="SSF49562">
    <property type="entry name" value="C2 domain (Calcium/lipid-binding domain, CaLB)"/>
    <property type="match status" value="1"/>
</dbReference>
<dbReference type="SUPFAM" id="SSF48065">
    <property type="entry name" value="DBL homology domain (DH-domain)"/>
    <property type="match status" value="1"/>
</dbReference>
<dbReference type="SUPFAM" id="SSF48350">
    <property type="entry name" value="GTPase activation domain, GAP"/>
    <property type="match status" value="1"/>
</dbReference>
<dbReference type="SUPFAM" id="SSF50729">
    <property type="entry name" value="PH domain-like"/>
    <property type="match status" value="1"/>
</dbReference>
<dbReference type="PROSITE" id="PS50004">
    <property type="entry name" value="C2"/>
    <property type="match status" value="1"/>
</dbReference>
<dbReference type="PROSITE" id="PS00741">
    <property type="entry name" value="DH_1"/>
    <property type="match status" value="1"/>
</dbReference>
<dbReference type="PROSITE" id="PS50010">
    <property type="entry name" value="DH_2"/>
    <property type="match status" value="1"/>
</dbReference>
<dbReference type="PROSITE" id="PS50003">
    <property type="entry name" value="PH_DOMAIN"/>
    <property type="match status" value="1"/>
</dbReference>
<dbReference type="PROSITE" id="PS50238">
    <property type="entry name" value="RHOGAP"/>
    <property type="match status" value="1"/>
</dbReference>
<evidence type="ECO:0000250" key="1">
    <source>
        <dbReference type="UniProtKB" id="A0A0G2JTR4"/>
    </source>
</evidence>
<evidence type="ECO:0000250" key="2">
    <source>
        <dbReference type="UniProtKB" id="Q12979"/>
    </source>
</evidence>
<evidence type="ECO:0000250" key="3">
    <source>
        <dbReference type="UniProtKB" id="Q5SSL4"/>
    </source>
</evidence>
<evidence type="ECO:0000255" key="4">
    <source>
        <dbReference type="PROSITE-ProRule" id="PRU00041"/>
    </source>
</evidence>
<evidence type="ECO:0000255" key="5">
    <source>
        <dbReference type="PROSITE-ProRule" id="PRU00062"/>
    </source>
</evidence>
<evidence type="ECO:0000255" key="6">
    <source>
        <dbReference type="PROSITE-ProRule" id="PRU00145"/>
    </source>
</evidence>
<evidence type="ECO:0000255" key="7">
    <source>
        <dbReference type="PROSITE-ProRule" id="PRU00172"/>
    </source>
</evidence>
<evidence type="ECO:0000256" key="8">
    <source>
        <dbReference type="SAM" id="MobiDB-lite"/>
    </source>
</evidence>
<evidence type="ECO:0000303" key="9">
    <source ref="1"/>
</evidence>
<reference key="1">
    <citation type="submission" date="2006-02" db="EMBL/GenBank/DDBJ databases">
        <authorList>
            <consortium name="NIH - Mammalian Gene Collection (MGC) project"/>
        </authorList>
    </citation>
    <scope>NUCLEOTIDE SEQUENCE [LARGE SCALE MRNA] (ISOFORMS 1 AND 2)</scope>
    <source>
        <strain>Hereford</strain>
        <tissue>Fetal cerebellum</tissue>
        <tissue>Hypothalamus</tissue>
    </source>
</reference>
<proteinExistence type="evidence at transcript level"/>
<comment type="function">
    <text evidence="2 3">Protein with a unique structure having two opposing regulatory activities toward small GTP-binding proteins. The C-terminus is a GTPase-activating protein domain which stimulates GTP hydrolysis by RAC1, RAC2 and CDC42. Accelerates the intrinsic rate of GTP hydrolysis of RAC1 or CDC42, leading to down-regulation of the active GTP-bound form. The central Dbl homology (DH) domain functions as guanine nucleotide exchange factor (GEF) that modulates the GTPases CDC42, RHOA and RAC1. Promotes the conversion of CDC42, RHOA and RAC1 from the GDP-bound to the GTP-bound form (By similarity). Functions as an important negative regulator of neuronal RAC1 activity (By similarity). Regulates macrophage functions such as CSF1-directed motility and phagocytosis through the modulation of RAC1 activity (By similarity).</text>
</comment>
<comment type="subunit">
    <text evidence="2">Interacts with DLG4.</text>
</comment>
<comment type="subcellular location">
    <subcellularLocation>
        <location evidence="3">Cell projection</location>
        <location evidence="3">Dendritic spine</location>
    </subcellularLocation>
    <subcellularLocation>
        <location evidence="3">Cell projection</location>
        <location evidence="3">Axon</location>
    </subcellularLocation>
    <subcellularLocation>
        <location evidence="1">Synapse</location>
    </subcellularLocation>
</comment>
<comment type="alternative products">
    <event type="alternative splicing"/>
    <isoform>
        <id>A6QNS3-1</id>
        <name>1</name>
        <sequence type="displayed"/>
    </isoform>
    <isoform>
        <id>A6QNS3-2</id>
        <name>2</name>
        <sequence type="described" ref="VSP_035900 VSP_035901 VSP_035902"/>
    </isoform>
</comment>
<comment type="domain">
    <text evidence="2">The central Dbl homology (DH) domain functions as a guanine nucleotide exchange factor (GEF) that modulates the GTPases CDC42, RHOA and RAC1. Promotes the conversion of CDC42, RHOA and RAC1 from the GDP-bound to the GTP-bound form. The C-terminus is a Rho-GAP domain which stimulates GTP hydrolysis by RAC1, RAC2 and CDC42. The protein has a unique structure having two opposing regulatory activities toward small GTP-binding proteins.</text>
</comment>
<name>ABR_BOVIN</name>
<gene>
    <name type="primary">ABR</name>
</gene>
<protein>
    <recommendedName>
        <fullName>Active breakpoint cluster region-related protein</fullName>
    </recommendedName>
</protein>
<feature type="chain" id="PRO_0000355538" description="Active breakpoint cluster region-related protein">
    <location>
        <begin position="1"/>
        <end position="859"/>
    </location>
</feature>
<feature type="domain" description="DH" evidence="5">
    <location>
        <begin position="91"/>
        <end position="284"/>
    </location>
</feature>
<feature type="domain" description="PH" evidence="6">
    <location>
        <begin position="301"/>
        <end position="459"/>
    </location>
</feature>
<feature type="domain" description="C2" evidence="4">
    <location>
        <begin position="484"/>
        <end position="613"/>
    </location>
</feature>
<feature type="domain" description="Rho-GAP" evidence="7">
    <location>
        <begin position="647"/>
        <end position="845"/>
    </location>
</feature>
<feature type="region of interest" description="Disordered" evidence="8">
    <location>
        <begin position="27"/>
        <end position="84"/>
    </location>
</feature>
<feature type="compositionally biased region" description="Polar residues" evidence="8">
    <location>
        <begin position="54"/>
        <end position="64"/>
    </location>
</feature>
<feature type="site" description="Arginine finger; crucial for GTP hydrolysis by stabilizing the transition state" evidence="7">
    <location>
        <position position="683"/>
    </location>
</feature>
<feature type="modified residue" description="Phosphoserine" evidence="3">
    <location>
        <position position="57"/>
    </location>
</feature>
<feature type="splice variant" id="VSP_035900" description="In isoform 2." evidence="9">
    <location>
        <begin position="1"/>
        <end position="218"/>
    </location>
</feature>
<feature type="splice variant" id="VSP_035901" description="In isoform 2." evidence="9">
    <original>GPKDSRDSHTSVTME</original>
    <variation>MEILLIIRFCCNCTY</variation>
    <location>
        <begin position="219"/>
        <end position="233"/>
    </location>
</feature>
<feature type="splice variant" id="VSP_035902" description="In isoform 2." evidence="9">
    <location>
        <begin position="326"/>
        <end position="689"/>
    </location>
</feature>
<keyword id="KW-0025">Alternative splicing</keyword>
<keyword id="KW-0966">Cell projection</keyword>
<keyword id="KW-0343">GTPase activation</keyword>
<keyword id="KW-0344">Guanine-nucleotide releasing factor</keyword>
<keyword id="KW-0597">Phosphoprotein</keyword>
<keyword id="KW-1185">Reference proteome</keyword>
<keyword id="KW-0770">Synapse</keyword>
<sequence length="859" mass="97612">MEPLSHRGLPRLSWIDTLYSNFSYGADDYDAEGNEEQKGPPEGSETMPYIDESPTMSPQLSARSQGGGDSISPTPPEGLAPGVEAGKGLEMRKLVLSGFLASEEIYINQLEALLLPMKPLKATATTSQPVLTIQQIETIFYKIQDIYEIHKEFYDNLCPKVQQWDSQVTMGHLFQKLASQLGVYKAFVDNYKVALETAEKCSQSNNQFQKISEELKVKGPKDSRDSHTSVTMEALLYKPIDRVTRSTLVLHDLLKHTPVDHPDYPLLQDALRISQNFLSSINEDIDPRRTAVTTPKGETRQLVKDGFLVEVSEGSRKLRHVFLFTDVLLCAKLKKTSAGKHQQYDCKWYIPLADLVFPSPEESEASPQVHPFPDHELEDMKMKISALKSEIQKEKANKGQSRAIERLKKKMFENEFLLLLNSPTIPFRIHNRNGKSYLFLLSSDYERSEWREAIQKLQKKDLQAFVLSSVELQVLTGSCFKLRTVHNIPVTSNKDDDESPGLYGFLHVIVHSAKGFKQSANLYCTLEVDSFGYFVSKAKTRVFRDTTEPKWDEEFEIELEGSQSLRILCYEKCYDKTKVNKDNNEIVDKIMGKGQIQLDPQTVETKNWHTDVIEMNGIKVEFSMKFTSRDMSLKRTPSKKQSGVFGVKISVVTKRERSKVPYIVRQCVEEVEKRGIEEVGIYRISGVATDIQALKAVFDANNKDILLMLSDMDINAIAGTLKLYFRELPEPLLTDRLYPAFMEGIALSDPAAKENCMMHLLRSLPDPNLITFLFLLEHLKRVAEKEPVNKMSLHNLATVFGPTLLRPSEVESKAHLTSAADIWSHDVMAQVQVLLYYLQHPPISFAELKRNTLYFSTDV</sequence>
<accession>A6QNS3</accession>
<accession>Q29RJ4</accession>
<organism>
    <name type="scientific">Bos taurus</name>
    <name type="common">Bovine</name>
    <dbReference type="NCBI Taxonomy" id="9913"/>
    <lineage>
        <taxon>Eukaryota</taxon>
        <taxon>Metazoa</taxon>
        <taxon>Chordata</taxon>
        <taxon>Craniata</taxon>
        <taxon>Vertebrata</taxon>
        <taxon>Euteleostomi</taxon>
        <taxon>Mammalia</taxon>
        <taxon>Eutheria</taxon>
        <taxon>Laurasiatheria</taxon>
        <taxon>Artiodactyla</taxon>
        <taxon>Ruminantia</taxon>
        <taxon>Pecora</taxon>
        <taxon>Bovidae</taxon>
        <taxon>Bovinae</taxon>
        <taxon>Bos</taxon>
    </lineage>
</organism>